<gene>
    <name evidence="1" type="primary">hemC</name>
    <name type="ordered locus">Sfum_3202</name>
</gene>
<feature type="chain" id="PRO_0000304285" description="Porphobilinogen deaminase">
    <location>
        <begin position="1"/>
        <end position="309"/>
    </location>
</feature>
<feature type="modified residue" description="S-(dipyrrolylmethanemethyl)cysteine" evidence="1">
    <location>
        <position position="242"/>
    </location>
</feature>
<dbReference type="EC" id="2.5.1.61" evidence="1"/>
<dbReference type="EMBL" id="CP000478">
    <property type="protein sequence ID" value="ABK18875.1"/>
    <property type="molecule type" value="Genomic_DNA"/>
</dbReference>
<dbReference type="RefSeq" id="WP_011700000.1">
    <property type="nucleotide sequence ID" value="NC_008554.1"/>
</dbReference>
<dbReference type="SMR" id="A0LN73"/>
<dbReference type="FunCoup" id="A0LN73">
    <property type="interactions" value="537"/>
</dbReference>
<dbReference type="STRING" id="335543.Sfum_3202"/>
<dbReference type="KEGG" id="sfu:Sfum_3202"/>
<dbReference type="eggNOG" id="COG0181">
    <property type="taxonomic scope" value="Bacteria"/>
</dbReference>
<dbReference type="HOGENOM" id="CLU_019704_0_2_7"/>
<dbReference type="InParanoid" id="A0LN73"/>
<dbReference type="OrthoDB" id="9810298at2"/>
<dbReference type="UniPathway" id="UPA00251">
    <property type="reaction ID" value="UER00319"/>
</dbReference>
<dbReference type="Proteomes" id="UP000001784">
    <property type="component" value="Chromosome"/>
</dbReference>
<dbReference type="GO" id="GO:0005737">
    <property type="term" value="C:cytoplasm"/>
    <property type="evidence" value="ECO:0007669"/>
    <property type="project" value="TreeGrafter"/>
</dbReference>
<dbReference type="GO" id="GO:0004418">
    <property type="term" value="F:hydroxymethylbilane synthase activity"/>
    <property type="evidence" value="ECO:0007669"/>
    <property type="project" value="UniProtKB-UniRule"/>
</dbReference>
<dbReference type="GO" id="GO:0006782">
    <property type="term" value="P:protoporphyrinogen IX biosynthetic process"/>
    <property type="evidence" value="ECO:0007669"/>
    <property type="project" value="UniProtKB-UniRule"/>
</dbReference>
<dbReference type="CDD" id="cd13646">
    <property type="entry name" value="PBP2_EcHMBS_like"/>
    <property type="match status" value="1"/>
</dbReference>
<dbReference type="FunFam" id="3.30.160.40:FF:000002">
    <property type="entry name" value="Porphobilinogen deaminase"/>
    <property type="match status" value="1"/>
</dbReference>
<dbReference type="FunFam" id="3.40.190.10:FF:000004">
    <property type="entry name" value="Porphobilinogen deaminase"/>
    <property type="match status" value="1"/>
</dbReference>
<dbReference type="FunFam" id="3.40.190.10:FF:000005">
    <property type="entry name" value="Porphobilinogen deaminase"/>
    <property type="match status" value="1"/>
</dbReference>
<dbReference type="Gene3D" id="3.40.190.10">
    <property type="entry name" value="Periplasmic binding protein-like II"/>
    <property type="match status" value="2"/>
</dbReference>
<dbReference type="Gene3D" id="3.30.160.40">
    <property type="entry name" value="Porphobilinogen deaminase, C-terminal domain"/>
    <property type="match status" value="1"/>
</dbReference>
<dbReference type="HAMAP" id="MF_00260">
    <property type="entry name" value="Porphobil_deam"/>
    <property type="match status" value="1"/>
</dbReference>
<dbReference type="InterPro" id="IPR000860">
    <property type="entry name" value="HemC"/>
</dbReference>
<dbReference type="InterPro" id="IPR022419">
    <property type="entry name" value="Porphobilin_deaminase_cofac_BS"/>
</dbReference>
<dbReference type="InterPro" id="IPR022417">
    <property type="entry name" value="Porphobilin_deaminase_N"/>
</dbReference>
<dbReference type="InterPro" id="IPR022418">
    <property type="entry name" value="Porphobilinogen_deaminase_C"/>
</dbReference>
<dbReference type="InterPro" id="IPR036803">
    <property type="entry name" value="Porphobilinogen_deaminase_C_sf"/>
</dbReference>
<dbReference type="NCBIfam" id="TIGR00212">
    <property type="entry name" value="hemC"/>
    <property type="match status" value="1"/>
</dbReference>
<dbReference type="PANTHER" id="PTHR11557">
    <property type="entry name" value="PORPHOBILINOGEN DEAMINASE"/>
    <property type="match status" value="1"/>
</dbReference>
<dbReference type="PANTHER" id="PTHR11557:SF0">
    <property type="entry name" value="PORPHOBILINOGEN DEAMINASE"/>
    <property type="match status" value="1"/>
</dbReference>
<dbReference type="Pfam" id="PF01379">
    <property type="entry name" value="Porphobil_deam"/>
    <property type="match status" value="1"/>
</dbReference>
<dbReference type="Pfam" id="PF03900">
    <property type="entry name" value="Porphobil_deamC"/>
    <property type="match status" value="1"/>
</dbReference>
<dbReference type="PIRSF" id="PIRSF001438">
    <property type="entry name" value="4pyrrol_synth_OHMeBilane_synth"/>
    <property type="match status" value="1"/>
</dbReference>
<dbReference type="PRINTS" id="PR00151">
    <property type="entry name" value="PORPHBDMNASE"/>
</dbReference>
<dbReference type="SUPFAM" id="SSF53850">
    <property type="entry name" value="Periplasmic binding protein-like II"/>
    <property type="match status" value="1"/>
</dbReference>
<dbReference type="SUPFAM" id="SSF54782">
    <property type="entry name" value="Porphobilinogen deaminase (hydroxymethylbilane synthase), C-terminal domain"/>
    <property type="match status" value="1"/>
</dbReference>
<dbReference type="PROSITE" id="PS00533">
    <property type="entry name" value="PORPHOBILINOGEN_DEAM"/>
    <property type="match status" value="1"/>
</dbReference>
<reference key="1">
    <citation type="submission" date="2006-10" db="EMBL/GenBank/DDBJ databases">
        <title>Complete sequence of Syntrophobacter fumaroxidans MPOB.</title>
        <authorList>
            <consortium name="US DOE Joint Genome Institute"/>
            <person name="Copeland A."/>
            <person name="Lucas S."/>
            <person name="Lapidus A."/>
            <person name="Barry K."/>
            <person name="Detter J.C."/>
            <person name="Glavina del Rio T."/>
            <person name="Hammon N."/>
            <person name="Israni S."/>
            <person name="Pitluck S."/>
            <person name="Goltsman E.G."/>
            <person name="Martinez M."/>
            <person name="Schmutz J."/>
            <person name="Larimer F."/>
            <person name="Land M."/>
            <person name="Hauser L."/>
            <person name="Kyrpides N."/>
            <person name="Kim E."/>
            <person name="Boone D.R."/>
            <person name="Brockman F."/>
            <person name="Culley D."/>
            <person name="Ferry J."/>
            <person name="Gunsalus R."/>
            <person name="McInerney M.J."/>
            <person name="Morrison M."/>
            <person name="Plugge C."/>
            <person name="Rohlin L."/>
            <person name="Scholten J."/>
            <person name="Sieber J."/>
            <person name="Stams A.J.M."/>
            <person name="Worm P."/>
            <person name="Henstra A.M."/>
            <person name="Richardson P."/>
        </authorList>
    </citation>
    <scope>NUCLEOTIDE SEQUENCE [LARGE SCALE GENOMIC DNA]</scope>
    <source>
        <strain>DSM 10017 / MPOB</strain>
    </source>
</reference>
<keyword id="KW-0627">Porphyrin biosynthesis</keyword>
<keyword id="KW-1185">Reference proteome</keyword>
<keyword id="KW-0808">Transferase</keyword>
<protein>
    <recommendedName>
        <fullName evidence="1">Porphobilinogen deaminase</fullName>
        <shortName evidence="1">PBG</shortName>
        <ecNumber evidence="1">2.5.1.61</ecNumber>
    </recommendedName>
    <alternativeName>
        <fullName evidence="1">Hydroxymethylbilane synthase</fullName>
        <shortName evidence="1">HMBS</shortName>
    </alternativeName>
    <alternativeName>
        <fullName evidence="1">Pre-uroporphyrinogen synthase</fullName>
    </alternativeName>
</protein>
<evidence type="ECO:0000255" key="1">
    <source>
        <dbReference type="HAMAP-Rule" id="MF_00260"/>
    </source>
</evidence>
<sequence>MTDRVIRIGTRGSMLALKQSGNVKAAMEALWPGLRVELQVVRTTGDKILDVPLAKVGGKGLFVKEIEDALLARTVDLAVHSMKDVPAILPEGLEIGAIPKREDPRDVIVTRTGKGIADLPMGGRVGTSSLRRASQIRKLRPDIEIANLRGNIETRLRKLTEGAFDAIILAAAGLHRMGWQNRVTSYLDPADFLPAIGQGAIGIELRCDDGEVRELLAPLHDPDTHVAVEAERSLLRTLEGGCQVPIGGHAHLVDGTLTLSGMVASIDGEELFRASRAGSPAQARKIGRDVGMELLDSGARRILEEIYRA</sequence>
<name>HEM3_SYNFM</name>
<accession>A0LN73</accession>
<comment type="function">
    <text evidence="1">Tetrapolymerization of the monopyrrole PBG into the hydroxymethylbilane pre-uroporphyrinogen in several discrete steps.</text>
</comment>
<comment type="catalytic activity">
    <reaction evidence="1">
        <text>4 porphobilinogen + H2O = hydroxymethylbilane + 4 NH4(+)</text>
        <dbReference type="Rhea" id="RHEA:13185"/>
        <dbReference type="ChEBI" id="CHEBI:15377"/>
        <dbReference type="ChEBI" id="CHEBI:28938"/>
        <dbReference type="ChEBI" id="CHEBI:57845"/>
        <dbReference type="ChEBI" id="CHEBI:58126"/>
        <dbReference type="EC" id="2.5.1.61"/>
    </reaction>
</comment>
<comment type="cofactor">
    <cofactor evidence="1">
        <name>dipyrromethane</name>
        <dbReference type="ChEBI" id="CHEBI:60342"/>
    </cofactor>
    <text evidence="1">Binds 1 dipyrromethane group covalently.</text>
</comment>
<comment type="pathway">
    <text evidence="1">Porphyrin-containing compound metabolism; protoporphyrin-IX biosynthesis; coproporphyrinogen-III from 5-aminolevulinate: step 2/4.</text>
</comment>
<comment type="subunit">
    <text evidence="1">Monomer.</text>
</comment>
<comment type="miscellaneous">
    <text evidence="1">The porphobilinogen subunits are added to the dipyrromethane group.</text>
</comment>
<comment type="similarity">
    <text evidence="1">Belongs to the HMBS family.</text>
</comment>
<organism>
    <name type="scientific">Syntrophobacter fumaroxidans (strain DSM 10017 / MPOB)</name>
    <dbReference type="NCBI Taxonomy" id="335543"/>
    <lineage>
        <taxon>Bacteria</taxon>
        <taxon>Pseudomonadati</taxon>
        <taxon>Thermodesulfobacteriota</taxon>
        <taxon>Syntrophobacteria</taxon>
        <taxon>Syntrophobacterales</taxon>
        <taxon>Syntrophobacteraceae</taxon>
        <taxon>Syntrophobacter</taxon>
    </lineage>
</organism>
<proteinExistence type="inferred from homology"/>